<proteinExistence type="inferred from homology"/>
<evidence type="ECO:0000255" key="1">
    <source>
        <dbReference type="HAMAP-Rule" id="MF_00581"/>
    </source>
</evidence>
<sequence>MNQNHTILQNLPVGQKVGIAFSGGLDTSAALLWMKLKGALPYAYTANLGQPDEDDYNAIPKKAMEYGAENARLIDCRAQLAHEGIAAIQCGAFHVSTGGIAYFNTTPLGRAVTGTMLVSAMKEDDVNIWGDGSTYKGNDIERFYRYGLLTNPALKIYKPWLDQQFIDELGGRHEMSEFLIANGFNYKMSVEKAYSTDSNMLGATHEAKDLEFLNSGIKIVKPIMGVAFWDENVEIEPEEVSVRFEEGVPVALNGKEYADPVELFLEANRIGGRHGLGMSDQIENRIIEAKSRGIYEAPGMALFHIAYERLVTGIHNEDTIEQYRINGLRLGRLLYQGRWFDSQALMLRETAQRWVAKAVTGEVTLELRRGNDYSILNTESPNLTYQPERLSMEKVEGAAFTPLDRIGQLTMRNLDITDTRAKLGIYSQSGLLSLGEGSVLPQLGNKQ</sequence>
<reference key="1">
    <citation type="journal article" date="2008" name="J. Bacteriol.">
        <title>Complete genome sequence of Neisseria gonorrhoeae NCCP11945.</title>
        <authorList>
            <person name="Chung G.T."/>
            <person name="Yoo J.S."/>
            <person name="Oh H.B."/>
            <person name="Lee Y.S."/>
            <person name="Cha S.H."/>
            <person name="Kim S.J."/>
            <person name="Yoo C.K."/>
        </authorList>
    </citation>
    <scope>NUCLEOTIDE SEQUENCE [LARGE SCALE GENOMIC DNA]</scope>
    <source>
        <strain>NCCP11945</strain>
    </source>
</reference>
<dbReference type="EC" id="6.3.4.5" evidence="1"/>
<dbReference type="EMBL" id="CP001050">
    <property type="protein sequence ID" value="ACF30888.1"/>
    <property type="molecule type" value="Genomic_DNA"/>
</dbReference>
<dbReference type="RefSeq" id="WP_003688135.1">
    <property type="nucleotide sequence ID" value="NC_011035.1"/>
</dbReference>
<dbReference type="SMR" id="B4RQS8"/>
<dbReference type="GeneID" id="66754155"/>
<dbReference type="KEGG" id="ngk:NGK_2284"/>
<dbReference type="HOGENOM" id="CLU_032784_4_1_4"/>
<dbReference type="UniPathway" id="UPA00068">
    <property type="reaction ID" value="UER00113"/>
</dbReference>
<dbReference type="Proteomes" id="UP000002564">
    <property type="component" value="Chromosome"/>
</dbReference>
<dbReference type="GO" id="GO:0005737">
    <property type="term" value="C:cytoplasm"/>
    <property type="evidence" value="ECO:0007669"/>
    <property type="project" value="UniProtKB-SubCell"/>
</dbReference>
<dbReference type="GO" id="GO:0004055">
    <property type="term" value="F:argininosuccinate synthase activity"/>
    <property type="evidence" value="ECO:0007669"/>
    <property type="project" value="UniProtKB-UniRule"/>
</dbReference>
<dbReference type="GO" id="GO:0005524">
    <property type="term" value="F:ATP binding"/>
    <property type="evidence" value="ECO:0007669"/>
    <property type="project" value="UniProtKB-UniRule"/>
</dbReference>
<dbReference type="GO" id="GO:0042803">
    <property type="term" value="F:protein homodimerization activity"/>
    <property type="evidence" value="ECO:0007669"/>
    <property type="project" value="InterPro"/>
</dbReference>
<dbReference type="GO" id="GO:0000053">
    <property type="term" value="P:argininosuccinate metabolic process"/>
    <property type="evidence" value="ECO:0007669"/>
    <property type="project" value="TreeGrafter"/>
</dbReference>
<dbReference type="GO" id="GO:0006526">
    <property type="term" value="P:L-arginine biosynthetic process"/>
    <property type="evidence" value="ECO:0007669"/>
    <property type="project" value="UniProtKB-UniRule"/>
</dbReference>
<dbReference type="GO" id="GO:0000050">
    <property type="term" value="P:urea cycle"/>
    <property type="evidence" value="ECO:0007669"/>
    <property type="project" value="TreeGrafter"/>
</dbReference>
<dbReference type="CDD" id="cd01999">
    <property type="entry name" value="ASS"/>
    <property type="match status" value="1"/>
</dbReference>
<dbReference type="FunFam" id="1.10.287.400:FF:000001">
    <property type="entry name" value="Argininosuccinate synthase"/>
    <property type="match status" value="1"/>
</dbReference>
<dbReference type="Gene3D" id="1.10.287.400">
    <property type="match status" value="1"/>
</dbReference>
<dbReference type="Gene3D" id="3.90.1260.10">
    <property type="entry name" value="Argininosuccinate synthetase, chain A, domain 2"/>
    <property type="match status" value="1"/>
</dbReference>
<dbReference type="Gene3D" id="3.40.50.620">
    <property type="entry name" value="HUPs"/>
    <property type="match status" value="1"/>
</dbReference>
<dbReference type="HAMAP" id="MF_00581">
    <property type="entry name" value="Arg_succ_synth_type2"/>
    <property type="match status" value="1"/>
</dbReference>
<dbReference type="InterPro" id="IPR023437">
    <property type="entry name" value="Arg_succ_synth_type2_subfam"/>
</dbReference>
<dbReference type="InterPro" id="IPR048268">
    <property type="entry name" value="Arginosuc_syn_C"/>
</dbReference>
<dbReference type="InterPro" id="IPR048267">
    <property type="entry name" value="Arginosuc_syn_N"/>
</dbReference>
<dbReference type="InterPro" id="IPR001518">
    <property type="entry name" value="Arginosuc_synth"/>
</dbReference>
<dbReference type="InterPro" id="IPR018223">
    <property type="entry name" value="Arginosuc_synth_CS"/>
</dbReference>
<dbReference type="InterPro" id="IPR023434">
    <property type="entry name" value="Arginosuc_synth_type_1_subfam"/>
</dbReference>
<dbReference type="InterPro" id="IPR024074">
    <property type="entry name" value="AS_cat/multimer_dom_body"/>
</dbReference>
<dbReference type="InterPro" id="IPR024073">
    <property type="entry name" value="AS_multimer_C_tail"/>
</dbReference>
<dbReference type="InterPro" id="IPR014729">
    <property type="entry name" value="Rossmann-like_a/b/a_fold"/>
</dbReference>
<dbReference type="NCBIfam" id="TIGR00032">
    <property type="entry name" value="argG"/>
    <property type="match status" value="1"/>
</dbReference>
<dbReference type="NCBIfam" id="NF003779">
    <property type="entry name" value="PRK05370.1"/>
    <property type="match status" value="1"/>
</dbReference>
<dbReference type="PANTHER" id="PTHR11587">
    <property type="entry name" value="ARGININOSUCCINATE SYNTHASE"/>
    <property type="match status" value="1"/>
</dbReference>
<dbReference type="PANTHER" id="PTHR11587:SF2">
    <property type="entry name" value="ARGININOSUCCINATE SYNTHASE"/>
    <property type="match status" value="1"/>
</dbReference>
<dbReference type="Pfam" id="PF20979">
    <property type="entry name" value="Arginosuc_syn_C"/>
    <property type="match status" value="1"/>
</dbReference>
<dbReference type="Pfam" id="PF00764">
    <property type="entry name" value="Arginosuc_synth"/>
    <property type="match status" value="1"/>
</dbReference>
<dbReference type="SUPFAM" id="SSF52402">
    <property type="entry name" value="Adenine nucleotide alpha hydrolases-like"/>
    <property type="match status" value="1"/>
</dbReference>
<dbReference type="SUPFAM" id="SSF69864">
    <property type="entry name" value="Argininosuccinate synthetase, C-terminal domain"/>
    <property type="match status" value="1"/>
</dbReference>
<dbReference type="PROSITE" id="PS00564">
    <property type="entry name" value="ARGININOSUCCIN_SYN_1"/>
    <property type="match status" value="1"/>
</dbReference>
<dbReference type="PROSITE" id="PS00565">
    <property type="entry name" value="ARGININOSUCCIN_SYN_2"/>
    <property type="match status" value="1"/>
</dbReference>
<gene>
    <name evidence="1" type="primary">argG</name>
    <name type="ordered locus">NGK_2284</name>
</gene>
<keyword id="KW-0028">Amino-acid biosynthesis</keyword>
<keyword id="KW-0055">Arginine biosynthesis</keyword>
<keyword id="KW-0067">ATP-binding</keyword>
<keyword id="KW-0963">Cytoplasm</keyword>
<keyword id="KW-0436">Ligase</keyword>
<keyword id="KW-0547">Nucleotide-binding</keyword>
<comment type="catalytic activity">
    <reaction evidence="1">
        <text>L-citrulline + L-aspartate + ATP = 2-(N(omega)-L-arginino)succinate + AMP + diphosphate + H(+)</text>
        <dbReference type="Rhea" id="RHEA:10932"/>
        <dbReference type="ChEBI" id="CHEBI:15378"/>
        <dbReference type="ChEBI" id="CHEBI:29991"/>
        <dbReference type="ChEBI" id="CHEBI:30616"/>
        <dbReference type="ChEBI" id="CHEBI:33019"/>
        <dbReference type="ChEBI" id="CHEBI:57472"/>
        <dbReference type="ChEBI" id="CHEBI:57743"/>
        <dbReference type="ChEBI" id="CHEBI:456215"/>
        <dbReference type="EC" id="6.3.4.5"/>
    </reaction>
</comment>
<comment type="pathway">
    <text evidence="1">Amino-acid biosynthesis; L-arginine biosynthesis; L-arginine from L-ornithine and carbamoyl phosphate: step 2/3.</text>
</comment>
<comment type="subunit">
    <text evidence="1">Homotetramer.</text>
</comment>
<comment type="subcellular location">
    <subcellularLocation>
        <location evidence="1">Cytoplasm</location>
    </subcellularLocation>
</comment>
<comment type="similarity">
    <text evidence="1">Belongs to the argininosuccinate synthase family. Type 2 subfamily.</text>
</comment>
<name>ASSY_NEIG2</name>
<feature type="chain" id="PRO_1000129757" description="Argininosuccinate synthase">
    <location>
        <begin position="1"/>
        <end position="447"/>
    </location>
</feature>
<feature type="binding site" evidence="1">
    <location>
        <begin position="20"/>
        <end position="28"/>
    </location>
    <ligand>
        <name>ATP</name>
        <dbReference type="ChEBI" id="CHEBI:30616"/>
    </ligand>
</feature>
<feature type="binding site" evidence="1">
    <location>
        <position position="46"/>
    </location>
    <ligand>
        <name>ATP</name>
        <dbReference type="ChEBI" id="CHEBI:30616"/>
    </ligand>
</feature>
<feature type="binding site" evidence="1">
    <location>
        <position position="102"/>
    </location>
    <ligand>
        <name>L-citrulline</name>
        <dbReference type="ChEBI" id="CHEBI:57743"/>
    </ligand>
</feature>
<feature type="binding site" evidence="1">
    <location>
        <position position="132"/>
    </location>
    <ligand>
        <name>ATP</name>
        <dbReference type="ChEBI" id="CHEBI:30616"/>
    </ligand>
</feature>
<feature type="binding site" evidence="1">
    <location>
        <position position="134"/>
    </location>
    <ligand>
        <name>ATP</name>
        <dbReference type="ChEBI" id="CHEBI:30616"/>
    </ligand>
</feature>
<feature type="binding site" evidence="1">
    <location>
        <position position="134"/>
    </location>
    <ligand>
        <name>L-aspartate</name>
        <dbReference type="ChEBI" id="CHEBI:29991"/>
    </ligand>
</feature>
<feature type="binding site" evidence="1">
    <location>
        <position position="138"/>
    </location>
    <ligand>
        <name>L-aspartate</name>
        <dbReference type="ChEBI" id="CHEBI:29991"/>
    </ligand>
</feature>
<feature type="binding site" evidence="1">
    <location>
        <position position="138"/>
    </location>
    <ligand>
        <name>L-citrulline</name>
        <dbReference type="ChEBI" id="CHEBI:57743"/>
    </ligand>
</feature>
<feature type="binding site" evidence="1">
    <location>
        <position position="139"/>
    </location>
    <ligand>
        <name>ATP</name>
        <dbReference type="ChEBI" id="CHEBI:30616"/>
    </ligand>
</feature>
<feature type="binding site" evidence="1">
    <location>
        <position position="139"/>
    </location>
    <ligand>
        <name>L-aspartate</name>
        <dbReference type="ChEBI" id="CHEBI:29991"/>
    </ligand>
</feature>
<feature type="binding site" evidence="1">
    <location>
        <position position="142"/>
    </location>
    <ligand>
        <name>L-citrulline</name>
        <dbReference type="ChEBI" id="CHEBI:57743"/>
    </ligand>
</feature>
<feature type="binding site" evidence="1">
    <location>
        <position position="195"/>
    </location>
    <ligand>
        <name>L-citrulline</name>
        <dbReference type="ChEBI" id="CHEBI:57743"/>
    </ligand>
</feature>
<feature type="binding site" evidence="1">
    <location>
        <position position="197"/>
    </location>
    <ligand>
        <name>ATP</name>
        <dbReference type="ChEBI" id="CHEBI:30616"/>
    </ligand>
</feature>
<feature type="binding site" evidence="1">
    <location>
        <position position="204"/>
    </location>
    <ligand>
        <name>L-citrulline</name>
        <dbReference type="ChEBI" id="CHEBI:57743"/>
    </ligand>
</feature>
<feature type="binding site" evidence="1">
    <location>
        <position position="206"/>
    </location>
    <ligand>
        <name>L-citrulline</name>
        <dbReference type="ChEBI" id="CHEBI:57743"/>
    </ligand>
</feature>
<feature type="binding site" evidence="1">
    <location>
        <position position="283"/>
    </location>
    <ligand>
        <name>L-citrulline</name>
        <dbReference type="ChEBI" id="CHEBI:57743"/>
    </ligand>
</feature>
<protein>
    <recommendedName>
        <fullName evidence="1">Argininosuccinate synthase</fullName>
        <ecNumber evidence="1">6.3.4.5</ecNumber>
    </recommendedName>
    <alternativeName>
        <fullName evidence="1">Citrulline--aspartate ligase</fullName>
    </alternativeName>
</protein>
<accession>B4RQS8</accession>
<organism>
    <name type="scientific">Neisseria gonorrhoeae (strain NCCP11945)</name>
    <dbReference type="NCBI Taxonomy" id="521006"/>
    <lineage>
        <taxon>Bacteria</taxon>
        <taxon>Pseudomonadati</taxon>
        <taxon>Pseudomonadota</taxon>
        <taxon>Betaproteobacteria</taxon>
        <taxon>Neisseriales</taxon>
        <taxon>Neisseriaceae</taxon>
        <taxon>Neisseria</taxon>
    </lineage>
</organism>